<name>CWC15_CANGA</name>
<sequence length="143" mass="15695">MTTAHRPQLEARNGAKGALVPTGTEHARLLPGHTELKARKPKNKTTSQIQTSSDAGSVDDSTSAGTNIGTGSATLGPSQVQKMIQPLEVEDKKDIKLVKKEDDSVSWGKTAFSRRKKVVKPEKFTNDTVRSQKHKEFLNRFVK</sequence>
<dbReference type="EMBL" id="CR380951">
    <property type="protein sequence ID" value="CAG58651.1"/>
    <property type="molecule type" value="Genomic_DNA"/>
</dbReference>
<dbReference type="RefSeq" id="XP_445732.1">
    <property type="nucleotide sequence ID" value="XM_445732.1"/>
</dbReference>
<dbReference type="FunCoup" id="Q6FVL2">
    <property type="interactions" value="175"/>
</dbReference>
<dbReference type="STRING" id="284593.Q6FVL2"/>
<dbReference type="EnsemblFungi" id="CAGL0E01023g-T">
    <property type="protein sequence ID" value="CAGL0E01023g-T-p1"/>
    <property type="gene ID" value="CAGL0E01023g"/>
</dbReference>
<dbReference type="KEGG" id="cgr:2887413"/>
<dbReference type="CGD" id="CAL0129014">
    <property type="gene designation" value="CAGL0E01023g"/>
</dbReference>
<dbReference type="VEuPathDB" id="FungiDB:CAGL0E01023g"/>
<dbReference type="eggNOG" id="KOG3228">
    <property type="taxonomic scope" value="Eukaryota"/>
</dbReference>
<dbReference type="HOGENOM" id="CLU_1805920_0_0_1"/>
<dbReference type="InParanoid" id="Q6FVL2"/>
<dbReference type="Proteomes" id="UP000002428">
    <property type="component" value="Chromosome E"/>
</dbReference>
<dbReference type="GO" id="GO:0071013">
    <property type="term" value="C:catalytic step 2 spliceosome"/>
    <property type="evidence" value="ECO:0007669"/>
    <property type="project" value="TreeGrafter"/>
</dbReference>
<dbReference type="GO" id="GO:0005634">
    <property type="term" value="C:nucleus"/>
    <property type="evidence" value="ECO:0000250"/>
    <property type="project" value="UniProtKB"/>
</dbReference>
<dbReference type="GO" id="GO:0000974">
    <property type="term" value="C:Prp19 complex"/>
    <property type="evidence" value="ECO:0007669"/>
    <property type="project" value="EnsemblFungi"/>
</dbReference>
<dbReference type="GO" id="GO:0005684">
    <property type="term" value="C:U2-type spliceosomal complex"/>
    <property type="evidence" value="ECO:0007669"/>
    <property type="project" value="EnsemblFungi"/>
</dbReference>
<dbReference type="GO" id="GO:0003723">
    <property type="term" value="F:RNA binding"/>
    <property type="evidence" value="ECO:0000250"/>
    <property type="project" value="UniProtKB"/>
</dbReference>
<dbReference type="GO" id="GO:0045292">
    <property type="term" value="P:mRNA cis splicing, via spliceosome"/>
    <property type="evidence" value="ECO:0007669"/>
    <property type="project" value="TreeGrafter"/>
</dbReference>
<dbReference type="GO" id="GO:0000398">
    <property type="term" value="P:mRNA splicing, via spliceosome"/>
    <property type="evidence" value="ECO:0000250"/>
    <property type="project" value="UniProtKB"/>
</dbReference>
<dbReference type="InterPro" id="IPR006973">
    <property type="entry name" value="Cwf_Cwc_15"/>
</dbReference>
<dbReference type="PANTHER" id="PTHR12718">
    <property type="entry name" value="CELL CYCLE CONTROL PROTEIN CWF15"/>
    <property type="match status" value="1"/>
</dbReference>
<dbReference type="PANTHER" id="PTHR12718:SF2">
    <property type="entry name" value="SPLICEOSOME-ASSOCIATED PROTEIN CWC15 HOMOLOG"/>
    <property type="match status" value="1"/>
</dbReference>
<dbReference type="Pfam" id="PF04889">
    <property type="entry name" value="Cwf_Cwc_15"/>
    <property type="match status" value="1"/>
</dbReference>
<protein>
    <recommendedName>
        <fullName>Pre-mRNA-splicing factor CWC15</fullName>
    </recommendedName>
</protein>
<feature type="chain" id="PRO_0000218238" description="Pre-mRNA-splicing factor CWC15">
    <location>
        <begin position="1"/>
        <end position="143"/>
    </location>
</feature>
<feature type="region of interest" description="Disordered" evidence="2">
    <location>
        <begin position="1"/>
        <end position="83"/>
    </location>
</feature>
<feature type="compositionally biased region" description="Polar residues" evidence="2">
    <location>
        <begin position="44"/>
        <end position="82"/>
    </location>
</feature>
<keyword id="KW-0507">mRNA processing</keyword>
<keyword id="KW-0508">mRNA splicing</keyword>
<keyword id="KW-0539">Nucleus</keyword>
<keyword id="KW-1185">Reference proteome</keyword>
<keyword id="KW-0747">Spliceosome</keyword>
<gene>
    <name type="primary">CWC15</name>
    <name type="ordered locus">CAGL0E01023g</name>
</gene>
<proteinExistence type="inferred from homology"/>
<comment type="function">
    <text evidence="1">Involved in pre-mRNA splicing.</text>
</comment>
<comment type="subunit">
    <text evidence="1">Associated with the spliceosome.</text>
</comment>
<comment type="subcellular location">
    <subcellularLocation>
        <location evidence="3">Nucleus</location>
    </subcellularLocation>
</comment>
<comment type="similarity">
    <text evidence="3">Belongs to the CWC15 family.</text>
</comment>
<evidence type="ECO:0000250" key="1"/>
<evidence type="ECO:0000256" key="2">
    <source>
        <dbReference type="SAM" id="MobiDB-lite"/>
    </source>
</evidence>
<evidence type="ECO:0000305" key="3"/>
<accession>Q6FVL2</accession>
<organism>
    <name type="scientific">Candida glabrata (strain ATCC 2001 / BCRC 20586 / JCM 3761 / NBRC 0622 / NRRL Y-65 / CBS 138)</name>
    <name type="common">Yeast</name>
    <name type="synonym">Nakaseomyces glabratus</name>
    <dbReference type="NCBI Taxonomy" id="284593"/>
    <lineage>
        <taxon>Eukaryota</taxon>
        <taxon>Fungi</taxon>
        <taxon>Dikarya</taxon>
        <taxon>Ascomycota</taxon>
        <taxon>Saccharomycotina</taxon>
        <taxon>Saccharomycetes</taxon>
        <taxon>Saccharomycetales</taxon>
        <taxon>Saccharomycetaceae</taxon>
        <taxon>Nakaseomyces</taxon>
    </lineage>
</organism>
<reference key="1">
    <citation type="journal article" date="2004" name="Nature">
        <title>Genome evolution in yeasts.</title>
        <authorList>
            <person name="Dujon B."/>
            <person name="Sherman D."/>
            <person name="Fischer G."/>
            <person name="Durrens P."/>
            <person name="Casaregola S."/>
            <person name="Lafontaine I."/>
            <person name="de Montigny J."/>
            <person name="Marck C."/>
            <person name="Neuveglise C."/>
            <person name="Talla E."/>
            <person name="Goffard N."/>
            <person name="Frangeul L."/>
            <person name="Aigle M."/>
            <person name="Anthouard V."/>
            <person name="Babour A."/>
            <person name="Barbe V."/>
            <person name="Barnay S."/>
            <person name="Blanchin S."/>
            <person name="Beckerich J.-M."/>
            <person name="Beyne E."/>
            <person name="Bleykasten C."/>
            <person name="Boisrame A."/>
            <person name="Boyer J."/>
            <person name="Cattolico L."/>
            <person name="Confanioleri F."/>
            <person name="de Daruvar A."/>
            <person name="Despons L."/>
            <person name="Fabre E."/>
            <person name="Fairhead C."/>
            <person name="Ferry-Dumazet H."/>
            <person name="Groppi A."/>
            <person name="Hantraye F."/>
            <person name="Hennequin C."/>
            <person name="Jauniaux N."/>
            <person name="Joyet P."/>
            <person name="Kachouri R."/>
            <person name="Kerrest A."/>
            <person name="Koszul R."/>
            <person name="Lemaire M."/>
            <person name="Lesur I."/>
            <person name="Ma L."/>
            <person name="Muller H."/>
            <person name="Nicaud J.-M."/>
            <person name="Nikolski M."/>
            <person name="Oztas S."/>
            <person name="Ozier-Kalogeropoulos O."/>
            <person name="Pellenz S."/>
            <person name="Potier S."/>
            <person name="Richard G.-F."/>
            <person name="Straub M.-L."/>
            <person name="Suleau A."/>
            <person name="Swennen D."/>
            <person name="Tekaia F."/>
            <person name="Wesolowski-Louvel M."/>
            <person name="Westhof E."/>
            <person name="Wirth B."/>
            <person name="Zeniou-Meyer M."/>
            <person name="Zivanovic Y."/>
            <person name="Bolotin-Fukuhara M."/>
            <person name="Thierry A."/>
            <person name="Bouchier C."/>
            <person name="Caudron B."/>
            <person name="Scarpelli C."/>
            <person name="Gaillardin C."/>
            <person name="Weissenbach J."/>
            <person name="Wincker P."/>
            <person name="Souciet J.-L."/>
        </authorList>
    </citation>
    <scope>NUCLEOTIDE SEQUENCE [LARGE SCALE GENOMIC DNA]</scope>
    <source>
        <strain>ATCC 2001 / BCRC 20586 / JCM 3761 / NBRC 0622 / NRRL Y-65 / CBS 138</strain>
    </source>
</reference>